<accession>Q6RS95</accession>
<keyword id="KW-0275">Fatty acid biosynthesis</keyword>
<keyword id="KW-0276">Fatty acid metabolism</keyword>
<keyword id="KW-0444">Lipid biosynthesis</keyword>
<keyword id="KW-0443">Lipid metabolism</keyword>
<keyword id="KW-0472">Membrane</keyword>
<keyword id="KW-0560">Oxidoreductase</keyword>
<keyword id="KW-0812">Transmembrane</keyword>
<keyword id="KW-1133">Transmembrane helix</keyword>
<name>FAD21_DIMSI</name>
<reference key="1">
    <citation type="journal article" date="2004" name="J. Biol. Chem.">
        <title>Dimorphecolic acid is synthesized by the coordinate activities of two divergent Delta12-oleic acid desaturases.</title>
        <authorList>
            <person name="Cahoon E.B."/>
            <person name="Kinney A.J."/>
        </authorList>
    </citation>
    <scope>NUCLEOTIDE SEQUENCE [MRNA]</scope>
    <scope>FUNCTION</scope>
    <scope>CATALYTIC ACTIVITY</scope>
</reference>
<proteinExistence type="evidence at protein level"/>
<protein>
    <recommendedName>
        <fullName evidence="5">Acyl-lipid (9+3)-(E)-desaturase</fullName>
        <ecNumber evidence="3">1.14.19.34</ecNumber>
    </recommendedName>
    <alternativeName>
        <fullName evidence="4">Fatty acid desaturase 2-1</fullName>
        <shortName evidence="4">DsFAD2-1</shortName>
    </alternativeName>
    <alternativeName>
        <fullName evidence="4">Trans-delta(12) oleic acid desaturase</fullName>
    </alternativeName>
</protein>
<feature type="chain" id="PRO_0000434888" description="Acyl-lipid (9+3)-(E)-desaturase">
    <location>
        <begin position="1"/>
        <end position="380"/>
    </location>
</feature>
<feature type="transmembrane region" description="Helical" evidence="1">
    <location>
        <begin position="52"/>
        <end position="72"/>
    </location>
</feature>
<feature type="transmembrane region" description="Helical" evidence="1">
    <location>
        <begin position="81"/>
        <end position="101"/>
    </location>
</feature>
<feature type="transmembrane region" description="Helical" evidence="1">
    <location>
        <begin position="177"/>
        <end position="197"/>
    </location>
</feature>
<feature type="transmembrane region" description="Helical" evidence="1">
    <location>
        <begin position="223"/>
        <end position="243"/>
    </location>
</feature>
<feature type="transmembrane region" description="Helical" evidence="1">
    <location>
        <begin position="247"/>
        <end position="267"/>
    </location>
</feature>
<feature type="region of interest" description="Disordered" evidence="2">
    <location>
        <begin position="1"/>
        <end position="25"/>
    </location>
</feature>
<feature type="short sequence motif" description="Histidine box-1" evidence="5">
    <location>
        <begin position="103"/>
        <end position="107"/>
    </location>
</feature>
<feature type="short sequence motif" description="Histidine box-2" evidence="5">
    <location>
        <begin position="139"/>
        <end position="143"/>
    </location>
</feature>
<feature type="short sequence motif" description="Histidine box-3" evidence="5">
    <location>
        <begin position="313"/>
        <end position="317"/>
    </location>
</feature>
<feature type="compositionally biased region" description="Polar residues" evidence="2">
    <location>
        <begin position="9"/>
        <end position="18"/>
    </location>
</feature>
<organism>
    <name type="scientific">Dimorphotheca sinuata</name>
    <name type="common">African daisy</name>
    <dbReference type="NCBI Taxonomy" id="112408"/>
    <lineage>
        <taxon>Eukaryota</taxon>
        <taxon>Viridiplantae</taxon>
        <taxon>Streptophyta</taxon>
        <taxon>Embryophyta</taxon>
        <taxon>Tracheophyta</taxon>
        <taxon>Spermatophyta</taxon>
        <taxon>Magnoliopsida</taxon>
        <taxon>eudicotyledons</taxon>
        <taxon>Gunneridae</taxon>
        <taxon>Pentapetalae</taxon>
        <taxon>asterids</taxon>
        <taxon>campanulids</taxon>
        <taxon>Asterales</taxon>
        <taxon>Asteraceae</taxon>
        <taxon>Asteroideae</taxon>
        <taxon>Calenduleae</taxon>
        <taxon>Dimorphotheca</taxon>
    </lineage>
</organism>
<evidence type="ECO:0000255" key="1"/>
<evidence type="ECO:0000256" key="2">
    <source>
        <dbReference type="SAM" id="MobiDB-lite"/>
    </source>
</evidence>
<evidence type="ECO:0000269" key="3">
    <source>
    </source>
</evidence>
<evidence type="ECO:0000303" key="4">
    <source>
    </source>
</evidence>
<evidence type="ECO:0000305" key="5"/>
<sequence length="380" mass="43570">MGAGGCISVSETKPNQKNSLERAPYDKPPFTISDLKKAIPPHLFKRSLIRSLSYVASDLTVAFLLYHATTYFHHLPQPFTALAWLAYWVAQGCVLTGVWVIGHECGHHGLSEYRGVDDTVGYILHSSLLVPYFSWKYSHRRHHSNTGSLDRDEVFVPKPRSKISWYSKYFNNPVGRIGVLFITLTLGWPLYLTFNVSGRPYDRFACHYSPNSPIYNNRERFQIYLSDIGIVITSLVLLRAAMVKGLVWLICVYGVPLMITNGFLVLVTYLQHTHPSLPHYDNSEWEWLKGALVTVDRDFGVLNTVFHHATDGHIVHHLFPTIPHYNAMEATKAVKPLMGEYYQYDATPFYVAMWREAKECLFVDRDEGEKGGVFWYKNKM</sequence>
<dbReference type="EC" id="1.14.19.34" evidence="3"/>
<dbReference type="EMBL" id="AY494986">
    <property type="protein sequence ID" value="AAS72902.1"/>
    <property type="molecule type" value="mRNA"/>
</dbReference>
<dbReference type="SMR" id="Q6RS95"/>
<dbReference type="KEGG" id="ag:AAS72902"/>
<dbReference type="BioCyc" id="MetaCyc:MONOMER-12589"/>
<dbReference type="BRENDA" id="1.14.19.34">
    <property type="organism ID" value="14177"/>
</dbReference>
<dbReference type="GO" id="GO:0016020">
    <property type="term" value="C:membrane"/>
    <property type="evidence" value="ECO:0007669"/>
    <property type="project" value="UniProtKB-SubCell"/>
</dbReference>
<dbReference type="GO" id="GO:0016491">
    <property type="term" value="F:oxidoreductase activity"/>
    <property type="evidence" value="ECO:0007669"/>
    <property type="project" value="UniProtKB-KW"/>
</dbReference>
<dbReference type="GO" id="GO:0006633">
    <property type="term" value="P:fatty acid biosynthetic process"/>
    <property type="evidence" value="ECO:0007669"/>
    <property type="project" value="UniProtKB-KW"/>
</dbReference>
<dbReference type="CDD" id="cd03507">
    <property type="entry name" value="Delta12-FADS-like"/>
    <property type="match status" value="1"/>
</dbReference>
<dbReference type="InterPro" id="IPR005804">
    <property type="entry name" value="FA_desaturase_dom"/>
</dbReference>
<dbReference type="InterPro" id="IPR012171">
    <property type="entry name" value="Fatty_acid_desaturase"/>
</dbReference>
<dbReference type="PANTHER" id="PTHR32100">
    <property type="entry name" value="OMEGA-6 FATTY ACID DESATURASE, CHLOROPLASTIC"/>
    <property type="match status" value="1"/>
</dbReference>
<dbReference type="Pfam" id="PF00487">
    <property type="entry name" value="FA_desaturase"/>
    <property type="match status" value="1"/>
</dbReference>
<comment type="function">
    <text evidence="3">Involved in the biosynthesis of dimorphecolic acid (9-OH-18:2(10E,12E)). Converts oleic acid (18:1(9Z)) into 18:2(9Z,12E) and probably palmitoleic acid (16:1(9Z)) into 16:2(9Z,12E). Very limited ability to catalyze (Z)-delta(12) desaturation.</text>
</comment>
<comment type="catalytic activity">
    <reaction evidence="3">
        <text>a (9Z)-octadecenoyl-containing glycerolipid + 2 Fe(II)-[cytochrome b5] + O2 + 2 H(+) = a (9Z,12E)-octadecadienoyl-containing glycerolipid + 2 Fe(III)-[cytochrome b5] + 2 H2O</text>
        <dbReference type="Rhea" id="RHEA:38047"/>
        <dbReference type="Rhea" id="RHEA-COMP:10438"/>
        <dbReference type="Rhea" id="RHEA-COMP:10439"/>
        <dbReference type="ChEBI" id="CHEBI:15377"/>
        <dbReference type="ChEBI" id="CHEBI:15378"/>
        <dbReference type="ChEBI" id="CHEBI:15379"/>
        <dbReference type="ChEBI" id="CHEBI:29033"/>
        <dbReference type="ChEBI" id="CHEBI:29034"/>
        <dbReference type="ChEBI" id="CHEBI:88240"/>
        <dbReference type="ChEBI" id="CHEBI:88241"/>
        <dbReference type="EC" id="1.14.19.34"/>
    </reaction>
</comment>
<comment type="catalytic activity">
    <reaction evidence="3">
        <text>a (9Z)-hexadecenoyl-containing glycerolipid + 2 Fe(II)-[cytochrome b5] + O2 + 2 H(+) = a (9Z,12E)-hexadecadienoyl-containing glycerolipid + 2 Fe(III)-[cytochrome b5] + 2 H2O</text>
        <dbReference type="Rhea" id="RHEA:46240"/>
        <dbReference type="Rhea" id="RHEA-COMP:10438"/>
        <dbReference type="Rhea" id="RHEA-COMP:10439"/>
        <dbReference type="ChEBI" id="CHEBI:15377"/>
        <dbReference type="ChEBI" id="CHEBI:15378"/>
        <dbReference type="ChEBI" id="CHEBI:15379"/>
        <dbReference type="ChEBI" id="CHEBI:29033"/>
        <dbReference type="ChEBI" id="CHEBI:29034"/>
        <dbReference type="ChEBI" id="CHEBI:88261"/>
        <dbReference type="ChEBI" id="CHEBI:88262"/>
        <dbReference type="EC" id="1.14.19.34"/>
    </reaction>
</comment>
<comment type="subcellular location">
    <subcellularLocation>
        <location evidence="1">Membrane</location>
        <topology evidence="1">Multi-pass membrane protein</topology>
    </subcellularLocation>
</comment>
<comment type="similarity">
    <text evidence="5">Belongs to the fatty acid desaturase type 1 family.</text>
</comment>